<organism>
    <name type="scientific">Anoura caudifer</name>
    <name type="common">Hairy-legged long-tongued bat</name>
    <dbReference type="NCBI Taxonomy" id="27642"/>
    <lineage>
        <taxon>Eukaryota</taxon>
        <taxon>Metazoa</taxon>
        <taxon>Chordata</taxon>
        <taxon>Craniata</taxon>
        <taxon>Vertebrata</taxon>
        <taxon>Euteleostomi</taxon>
        <taxon>Mammalia</taxon>
        <taxon>Eutheria</taxon>
        <taxon>Laurasiatheria</taxon>
        <taxon>Chiroptera</taxon>
        <taxon>Yangochiroptera</taxon>
        <taxon>Phyllostomidae</taxon>
        <taxon>Glossophaginae</taxon>
        <taxon>Anoura</taxon>
    </lineage>
</organism>
<geneLocation type="mitochondrion"/>
<proteinExistence type="inferred from homology"/>
<accession>Q31684</accession>
<reference key="1">
    <citation type="journal article" date="1993" name="Mol. Biol. Evol.">
        <title>Molecular phylogenetics of Stenodermatini bat genera: congruence of data from nuclear and mitochondrial DNA.</title>
        <authorList>
            <person name="den Bussche R.A."/>
            <person name="Baker R.J."/>
            <person name="Wichman H.A."/>
            <person name="Hamilton M.J."/>
        </authorList>
    </citation>
    <scope>NUCLEOTIDE SEQUENCE [GENOMIC DNA]</scope>
    <source>
        <strain>Isolate TK 19335</strain>
        <tissue>Muscle</tissue>
    </source>
</reference>
<dbReference type="EMBL" id="L19506">
    <property type="protein sequence ID" value="AAA31637.1"/>
    <property type="molecule type" value="Genomic_DNA"/>
</dbReference>
<dbReference type="SMR" id="Q31684"/>
<dbReference type="GO" id="GO:0005743">
    <property type="term" value="C:mitochondrial inner membrane"/>
    <property type="evidence" value="ECO:0007669"/>
    <property type="project" value="UniProtKB-SubCell"/>
</dbReference>
<dbReference type="GO" id="GO:0046872">
    <property type="term" value="F:metal ion binding"/>
    <property type="evidence" value="ECO:0007669"/>
    <property type="project" value="UniProtKB-KW"/>
</dbReference>
<dbReference type="GO" id="GO:0008121">
    <property type="term" value="F:ubiquinol-cytochrome-c reductase activity"/>
    <property type="evidence" value="ECO:0007669"/>
    <property type="project" value="TreeGrafter"/>
</dbReference>
<dbReference type="GO" id="GO:0006122">
    <property type="term" value="P:mitochondrial electron transport, ubiquinol to cytochrome c"/>
    <property type="evidence" value="ECO:0007669"/>
    <property type="project" value="TreeGrafter"/>
</dbReference>
<dbReference type="CDD" id="cd00284">
    <property type="entry name" value="Cytochrome_b_N"/>
    <property type="match status" value="1"/>
</dbReference>
<dbReference type="Gene3D" id="1.20.810.10">
    <property type="entry name" value="Cytochrome Bc1 Complex, Chain C"/>
    <property type="match status" value="1"/>
</dbReference>
<dbReference type="InterPro" id="IPR005797">
    <property type="entry name" value="Cyt_b/b6_N"/>
</dbReference>
<dbReference type="InterPro" id="IPR027387">
    <property type="entry name" value="Cytb/b6-like_sf"/>
</dbReference>
<dbReference type="InterPro" id="IPR048259">
    <property type="entry name" value="Cytochrome_b_N_euk/bac"/>
</dbReference>
<dbReference type="InterPro" id="IPR016174">
    <property type="entry name" value="Di-haem_cyt_TM"/>
</dbReference>
<dbReference type="PANTHER" id="PTHR19271">
    <property type="entry name" value="CYTOCHROME B"/>
    <property type="match status" value="1"/>
</dbReference>
<dbReference type="PANTHER" id="PTHR19271:SF16">
    <property type="entry name" value="CYTOCHROME B"/>
    <property type="match status" value="1"/>
</dbReference>
<dbReference type="Pfam" id="PF00033">
    <property type="entry name" value="Cytochrome_B"/>
    <property type="match status" value="1"/>
</dbReference>
<dbReference type="SUPFAM" id="SSF81342">
    <property type="entry name" value="Transmembrane di-heme cytochromes"/>
    <property type="match status" value="1"/>
</dbReference>
<dbReference type="PROSITE" id="PS51002">
    <property type="entry name" value="CYTB_NTER"/>
    <property type="match status" value="1"/>
</dbReference>
<keyword id="KW-0249">Electron transport</keyword>
<keyword id="KW-0349">Heme</keyword>
<keyword id="KW-0408">Iron</keyword>
<keyword id="KW-0472">Membrane</keyword>
<keyword id="KW-0479">Metal-binding</keyword>
<keyword id="KW-0496">Mitochondrion</keyword>
<keyword id="KW-0999">Mitochondrion inner membrane</keyword>
<keyword id="KW-0679">Respiratory chain</keyword>
<keyword id="KW-0812">Transmembrane</keyword>
<keyword id="KW-1133">Transmembrane helix</keyword>
<keyword id="KW-0813">Transport</keyword>
<keyword id="KW-0830">Ubiquinone</keyword>
<sequence>MTNIRKTHPLLKIINNSLVDLPAPSNLSSWWNFGSLLGVCLAVQILTGVFLAMHYTSDTTSAFNSVAHICRDVNYGWVLRYLHANGASMFFICLYVHVGRGLYYGSYMYSETWNVGILLLFAVMATAFMGYVLP</sequence>
<evidence type="ECO:0000250" key="1"/>
<evidence type="ECO:0000250" key="2">
    <source>
        <dbReference type="UniProtKB" id="P00157"/>
    </source>
</evidence>
<evidence type="ECO:0000255" key="3">
    <source>
        <dbReference type="PROSITE-ProRule" id="PRU00968"/>
    </source>
</evidence>
<comment type="function">
    <text evidence="2">Component of the ubiquinol-cytochrome c reductase complex (complex III or cytochrome b-c1 complex) that is part of the mitochondrial respiratory chain. The b-c1 complex mediates electron transfer from ubiquinol to cytochrome c. Contributes to the generation of a proton gradient across the mitochondrial membrane that is then used for ATP synthesis.</text>
</comment>
<comment type="cofactor">
    <cofactor evidence="2">
        <name>heme b</name>
        <dbReference type="ChEBI" id="CHEBI:60344"/>
    </cofactor>
    <text evidence="2">Binds 2 heme b groups non-covalently.</text>
</comment>
<comment type="subunit">
    <text evidence="2">The cytochrome bc1 complex contains 11 subunits: 3 respiratory subunits (MT-CYB, CYC1 and UQCRFS1), 2 core proteins (UQCRC1 and UQCRC2) and 6 low-molecular weight proteins (UQCRH/QCR6, UQCRB/QCR7, UQCRQ/QCR8, UQCR10/QCR9, UQCR11/QCR10 and a cleavage product of UQCRFS1). This cytochrome bc1 complex then forms a dimer.</text>
</comment>
<comment type="subcellular location">
    <subcellularLocation>
        <location evidence="2">Mitochondrion inner membrane</location>
        <topology evidence="2">Multi-pass membrane protein</topology>
    </subcellularLocation>
</comment>
<comment type="miscellaneous">
    <text evidence="1">Heme 1 (or BL or b562) is low-potential and absorbs at about 562 nm, and heme 2 (or BH or b566) is high-potential and absorbs at about 566 nm.</text>
</comment>
<comment type="similarity">
    <text evidence="3">Belongs to the cytochrome b family.</text>
</comment>
<comment type="caution">
    <text evidence="2">The full-length protein contains only eight transmembrane helices, not nine as predicted by bioinformatics tools.</text>
</comment>
<protein>
    <recommendedName>
        <fullName>Cytochrome b</fullName>
    </recommendedName>
    <alternativeName>
        <fullName>Complex III subunit 3</fullName>
    </alternativeName>
    <alternativeName>
        <fullName>Complex III subunit III</fullName>
    </alternativeName>
    <alternativeName>
        <fullName>Cytochrome b-c1 complex subunit 3</fullName>
    </alternativeName>
    <alternativeName>
        <fullName>Ubiquinol-cytochrome-c reductase complex cytochrome b subunit</fullName>
    </alternativeName>
</protein>
<feature type="chain" id="PRO_0000060586" description="Cytochrome b">
    <location>
        <begin position="1"/>
        <end position="134" status="greater than"/>
    </location>
</feature>
<feature type="transmembrane region" description="Helical" evidence="2">
    <location>
        <begin position="33"/>
        <end position="53"/>
    </location>
</feature>
<feature type="transmembrane region" description="Helical" evidence="2">
    <location>
        <begin position="77"/>
        <end position="98"/>
    </location>
</feature>
<feature type="transmembrane region" description="Helical" evidence="2">
    <location>
        <begin position="113"/>
        <end position="133"/>
    </location>
</feature>
<feature type="binding site" description="axial binding residue" evidence="2">
    <location>
        <position position="83"/>
    </location>
    <ligand>
        <name>heme b</name>
        <dbReference type="ChEBI" id="CHEBI:60344"/>
        <label>b562</label>
    </ligand>
    <ligandPart>
        <name>Fe</name>
        <dbReference type="ChEBI" id="CHEBI:18248"/>
    </ligandPart>
</feature>
<feature type="binding site" description="axial binding residue" evidence="2">
    <location>
        <position position="97"/>
    </location>
    <ligand>
        <name>heme b</name>
        <dbReference type="ChEBI" id="CHEBI:60344"/>
        <label>b566</label>
    </ligand>
    <ligandPart>
        <name>Fe</name>
        <dbReference type="ChEBI" id="CHEBI:18248"/>
    </ligandPart>
</feature>
<feature type="non-terminal residue">
    <location>
        <position position="134"/>
    </location>
</feature>
<name>CYB_ANOCU</name>
<gene>
    <name type="primary">MT-CYB</name>
    <name type="synonym">COB</name>
    <name type="synonym">CYTB</name>
    <name type="synonym">MTCYB</name>
</gene>